<accession>B1VZN5</accession>
<name>AMPA_STRGG</name>
<keyword id="KW-0031">Aminopeptidase</keyword>
<keyword id="KW-0963">Cytoplasm</keyword>
<keyword id="KW-0378">Hydrolase</keyword>
<keyword id="KW-0464">Manganese</keyword>
<keyword id="KW-0479">Metal-binding</keyword>
<keyword id="KW-0645">Protease</keyword>
<evidence type="ECO:0000255" key="1">
    <source>
        <dbReference type="HAMAP-Rule" id="MF_00181"/>
    </source>
</evidence>
<gene>
    <name evidence="1" type="primary">pepA</name>
    <name type="ordered locus">SGR_5331</name>
</gene>
<protein>
    <recommendedName>
        <fullName evidence="1">Probable cytosol aminopeptidase</fullName>
        <ecNumber evidence="1">3.4.11.1</ecNumber>
    </recommendedName>
    <alternativeName>
        <fullName evidence="1">Leucine aminopeptidase</fullName>
        <shortName evidence="1">LAP</shortName>
        <ecNumber evidence="1">3.4.11.10</ecNumber>
    </alternativeName>
    <alternativeName>
        <fullName evidence="1">Leucyl aminopeptidase</fullName>
    </alternativeName>
</protein>
<organism>
    <name type="scientific">Streptomyces griseus subsp. griseus (strain JCM 4626 / CBS 651.72 / NBRC 13350 / KCC S-0626 / ISP 5235)</name>
    <dbReference type="NCBI Taxonomy" id="455632"/>
    <lineage>
        <taxon>Bacteria</taxon>
        <taxon>Bacillati</taxon>
        <taxon>Actinomycetota</taxon>
        <taxon>Actinomycetes</taxon>
        <taxon>Kitasatosporales</taxon>
        <taxon>Streptomycetaceae</taxon>
        <taxon>Streptomyces</taxon>
    </lineage>
</organism>
<sequence length="515" mass="52267">MTALTLSTAGAATLRADALVVGVAKGVKGPVLAPGSEAVDKAFDGKLAAVLATLGATGAEGELTKLPAASGLKAPVVVAVGLGPVPDKEDAYDAEALRRAAGTAARALTGSKKAGFALPAASVEDAAAVAEGALLGAYAFTAYQGGENKLAPKDAKSKGNGPKLPLAEVALLGAKPRDKAYKAAVERSLALVEEINRARDLVNTPPNDLYPESFAAVATAAGKEHGVKVQVLDEKALVKGGFGGILGVGQGASRGPRLVKLAYTHPKAEKTLALVGKGITYDSGGISLKPAGHNETMKCDMAGAAAVFAAVVTAARLGLKVNVTGWLALAENMPSGNATRPGDVLRMYSGKTVEVLNTDAEGRLVLADALTRASEEKPDAIVDVATLTGAMVLALGNRTFGVMANDDAFRTSLHEIAEEVGEPSWPMPLPADLRKGMDSPTADIANMGERMGGGLVAGLFLKEFVGEGIAWAHLDIAGPAFHEGAPYGYTPKGGTGSAVRTLVRLAERTAAGDLG</sequence>
<reference key="1">
    <citation type="journal article" date="2008" name="J. Bacteriol.">
        <title>Genome sequence of the streptomycin-producing microorganism Streptomyces griseus IFO 13350.</title>
        <authorList>
            <person name="Ohnishi Y."/>
            <person name="Ishikawa J."/>
            <person name="Hara H."/>
            <person name="Suzuki H."/>
            <person name="Ikenoya M."/>
            <person name="Ikeda H."/>
            <person name="Yamashita A."/>
            <person name="Hattori M."/>
            <person name="Horinouchi S."/>
        </authorList>
    </citation>
    <scope>NUCLEOTIDE SEQUENCE [LARGE SCALE GENOMIC DNA]</scope>
    <source>
        <strain>JCM 4626 / CBS 651.72 / NBRC 13350 / KCC S-0626 / ISP 5235</strain>
    </source>
</reference>
<proteinExistence type="inferred from homology"/>
<comment type="function">
    <text evidence="1">Presumably involved in the processing and regular turnover of intracellular proteins. Catalyzes the removal of unsubstituted N-terminal amino acids from various peptides.</text>
</comment>
<comment type="catalytic activity">
    <reaction evidence="1">
        <text>Release of an N-terminal amino acid, Xaa-|-Yaa-, in which Xaa is preferably Leu, but may be other amino acids including Pro although not Arg or Lys, and Yaa may be Pro. Amino acid amides and methyl esters are also readily hydrolyzed, but rates on arylamides are exceedingly low.</text>
        <dbReference type="EC" id="3.4.11.1"/>
    </reaction>
</comment>
<comment type="catalytic activity">
    <reaction evidence="1">
        <text>Release of an N-terminal amino acid, preferentially leucine, but not glutamic or aspartic acids.</text>
        <dbReference type="EC" id="3.4.11.10"/>
    </reaction>
</comment>
<comment type="cofactor">
    <cofactor evidence="1">
        <name>Mn(2+)</name>
        <dbReference type="ChEBI" id="CHEBI:29035"/>
    </cofactor>
    <text evidence="1">Binds 2 manganese ions per subunit.</text>
</comment>
<comment type="subcellular location">
    <subcellularLocation>
        <location evidence="1">Cytoplasm</location>
    </subcellularLocation>
</comment>
<comment type="similarity">
    <text evidence="1">Belongs to the peptidase M17 family.</text>
</comment>
<dbReference type="EC" id="3.4.11.1" evidence="1"/>
<dbReference type="EC" id="3.4.11.10" evidence="1"/>
<dbReference type="EMBL" id="AP009493">
    <property type="protein sequence ID" value="BAG22160.1"/>
    <property type="molecule type" value="Genomic_DNA"/>
</dbReference>
<dbReference type="RefSeq" id="WP_012381247.1">
    <property type="nucleotide sequence ID" value="NC_010572.1"/>
</dbReference>
<dbReference type="SMR" id="B1VZN5"/>
<dbReference type="KEGG" id="sgr:SGR_5331"/>
<dbReference type="PATRIC" id="fig|455632.4.peg.5461"/>
<dbReference type="eggNOG" id="COG0260">
    <property type="taxonomic scope" value="Bacteria"/>
</dbReference>
<dbReference type="HOGENOM" id="CLU_013734_2_2_11"/>
<dbReference type="Proteomes" id="UP000001685">
    <property type="component" value="Chromosome"/>
</dbReference>
<dbReference type="GO" id="GO:0005737">
    <property type="term" value="C:cytoplasm"/>
    <property type="evidence" value="ECO:0007669"/>
    <property type="project" value="UniProtKB-SubCell"/>
</dbReference>
<dbReference type="GO" id="GO:0030145">
    <property type="term" value="F:manganese ion binding"/>
    <property type="evidence" value="ECO:0007669"/>
    <property type="project" value="UniProtKB-UniRule"/>
</dbReference>
<dbReference type="GO" id="GO:0070006">
    <property type="term" value="F:metalloaminopeptidase activity"/>
    <property type="evidence" value="ECO:0007669"/>
    <property type="project" value="InterPro"/>
</dbReference>
<dbReference type="GO" id="GO:0006508">
    <property type="term" value="P:proteolysis"/>
    <property type="evidence" value="ECO:0007669"/>
    <property type="project" value="UniProtKB-KW"/>
</dbReference>
<dbReference type="CDD" id="cd00433">
    <property type="entry name" value="Peptidase_M17"/>
    <property type="match status" value="1"/>
</dbReference>
<dbReference type="Gene3D" id="3.40.220.10">
    <property type="entry name" value="Leucine Aminopeptidase, subunit E, domain 1"/>
    <property type="match status" value="1"/>
</dbReference>
<dbReference type="Gene3D" id="3.40.630.10">
    <property type="entry name" value="Zn peptidases"/>
    <property type="match status" value="1"/>
</dbReference>
<dbReference type="HAMAP" id="MF_00181">
    <property type="entry name" value="Cytosol_peptidase_M17"/>
    <property type="match status" value="1"/>
</dbReference>
<dbReference type="InterPro" id="IPR011356">
    <property type="entry name" value="Leucine_aapep/pepB"/>
</dbReference>
<dbReference type="InterPro" id="IPR043472">
    <property type="entry name" value="Macro_dom-like"/>
</dbReference>
<dbReference type="InterPro" id="IPR000819">
    <property type="entry name" value="Peptidase_M17_C"/>
</dbReference>
<dbReference type="InterPro" id="IPR023042">
    <property type="entry name" value="Peptidase_M17_leu_NH2_pept"/>
</dbReference>
<dbReference type="InterPro" id="IPR008283">
    <property type="entry name" value="Peptidase_M17_N"/>
</dbReference>
<dbReference type="NCBIfam" id="NF002073">
    <property type="entry name" value="PRK00913.1-2"/>
    <property type="match status" value="1"/>
</dbReference>
<dbReference type="PANTHER" id="PTHR11963:SF23">
    <property type="entry name" value="CYTOSOL AMINOPEPTIDASE"/>
    <property type="match status" value="1"/>
</dbReference>
<dbReference type="PANTHER" id="PTHR11963">
    <property type="entry name" value="LEUCINE AMINOPEPTIDASE-RELATED"/>
    <property type="match status" value="1"/>
</dbReference>
<dbReference type="Pfam" id="PF00883">
    <property type="entry name" value="Peptidase_M17"/>
    <property type="match status" value="1"/>
</dbReference>
<dbReference type="Pfam" id="PF02789">
    <property type="entry name" value="Peptidase_M17_N"/>
    <property type="match status" value="1"/>
</dbReference>
<dbReference type="PRINTS" id="PR00481">
    <property type="entry name" value="LAMNOPPTDASE"/>
</dbReference>
<dbReference type="SUPFAM" id="SSF52949">
    <property type="entry name" value="Macro domain-like"/>
    <property type="match status" value="1"/>
</dbReference>
<dbReference type="SUPFAM" id="SSF53187">
    <property type="entry name" value="Zn-dependent exopeptidases"/>
    <property type="match status" value="1"/>
</dbReference>
<dbReference type="PROSITE" id="PS00631">
    <property type="entry name" value="CYTOSOL_AP"/>
    <property type="match status" value="1"/>
</dbReference>
<feature type="chain" id="PRO_1000098352" description="Probable cytosol aminopeptidase">
    <location>
        <begin position="1"/>
        <end position="515"/>
    </location>
</feature>
<feature type="active site" evidence="1">
    <location>
        <position position="289"/>
    </location>
</feature>
<feature type="active site" evidence="1">
    <location>
        <position position="363"/>
    </location>
</feature>
<feature type="binding site" evidence="1">
    <location>
        <position position="277"/>
    </location>
    <ligand>
        <name>Mn(2+)</name>
        <dbReference type="ChEBI" id="CHEBI:29035"/>
        <label>2</label>
    </ligand>
</feature>
<feature type="binding site" evidence="1">
    <location>
        <position position="282"/>
    </location>
    <ligand>
        <name>Mn(2+)</name>
        <dbReference type="ChEBI" id="CHEBI:29035"/>
        <label>1</label>
    </ligand>
</feature>
<feature type="binding site" evidence="1">
    <location>
        <position position="282"/>
    </location>
    <ligand>
        <name>Mn(2+)</name>
        <dbReference type="ChEBI" id="CHEBI:29035"/>
        <label>2</label>
    </ligand>
</feature>
<feature type="binding site" evidence="1">
    <location>
        <position position="300"/>
    </location>
    <ligand>
        <name>Mn(2+)</name>
        <dbReference type="ChEBI" id="CHEBI:29035"/>
        <label>2</label>
    </ligand>
</feature>
<feature type="binding site" evidence="1">
    <location>
        <position position="359"/>
    </location>
    <ligand>
        <name>Mn(2+)</name>
        <dbReference type="ChEBI" id="CHEBI:29035"/>
        <label>1</label>
    </ligand>
</feature>
<feature type="binding site" evidence="1">
    <location>
        <position position="361"/>
    </location>
    <ligand>
        <name>Mn(2+)</name>
        <dbReference type="ChEBI" id="CHEBI:29035"/>
        <label>1</label>
    </ligand>
</feature>
<feature type="binding site" evidence="1">
    <location>
        <position position="361"/>
    </location>
    <ligand>
        <name>Mn(2+)</name>
        <dbReference type="ChEBI" id="CHEBI:29035"/>
        <label>2</label>
    </ligand>
</feature>